<evidence type="ECO:0000250" key="1"/>
<evidence type="ECO:0000255" key="2"/>
<evidence type="ECO:0000256" key="3">
    <source>
        <dbReference type="SAM" id="MobiDB-lite"/>
    </source>
</evidence>
<evidence type="ECO:0000305" key="4"/>
<reference key="1">
    <citation type="journal article" date="1999" name="DNA Res.">
        <title>Cloning of cellulose synthase genes from Acetobacter xylinum JCM 7664: implication of a novel set of cellulose synthase genes.</title>
        <authorList>
            <person name="Umeda Y."/>
            <person name="Hirano A."/>
            <person name="Ishibashi M."/>
            <person name="Akiyama H."/>
            <person name="Onizuka T."/>
            <person name="Ikeuchi M."/>
            <person name="Inoue Y."/>
        </authorList>
    </citation>
    <scope>NUCLEOTIDE SEQUENCE [GENOMIC DNA]</scope>
    <source>
        <strain>JCM 7664 / NBRC 13693</strain>
    </source>
</reference>
<keyword id="KW-0998">Cell outer membrane</keyword>
<keyword id="KW-0135">Cellulose biosynthesis</keyword>
<keyword id="KW-0472">Membrane</keyword>
<keyword id="KW-0677">Repeat</keyword>
<keyword id="KW-0732">Signal</keyword>
<keyword id="KW-0802">TPR repeat</keyword>
<organism>
    <name type="scientific">Komagataeibacter xylinus</name>
    <name type="common">Gluconacetobacter xylinus</name>
    <dbReference type="NCBI Taxonomy" id="28448"/>
    <lineage>
        <taxon>Bacteria</taxon>
        <taxon>Pseudomonadati</taxon>
        <taxon>Pseudomonadota</taxon>
        <taxon>Alphaproteobacteria</taxon>
        <taxon>Acetobacterales</taxon>
        <taxon>Acetobacteraceae</taxon>
        <taxon>Komagataeibacter</taxon>
    </lineage>
</organism>
<proteinExistence type="inferred from homology"/>
<name>BCSC3_KOMXY</name>
<accession>Q9WX63</accession>
<dbReference type="EMBL" id="AB015802">
    <property type="protein sequence ID" value="BAA77587.1"/>
    <property type="molecule type" value="Genomic_DNA"/>
</dbReference>
<dbReference type="UniPathway" id="UPA00694"/>
<dbReference type="GO" id="GO:0009279">
    <property type="term" value="C:cell outer membrane"/>
    <property type="evidence" value="ECO:0007669"/>
    <property type="project" value="UniProtKB-SubCell"/>
</dbReference>
<dbReference type="GO" id="GO:0030244">
    <property type="term" value="P:cellulose biosynthetic process"/>
    <property type="evidence" value="ECO:0007669"/>
    <property type="project" value="UniProtKB-KW"/>
</dbReference>
<dbReference type="GO" id="GO:0006011">
    <property type="term" value="P:UDP-alpha-D-glucose metabolic process"/>
    <property type="evidence" value="ECO:0007669"/>
    <property type="project" value="InterPro"/>
</dbReference>
<dbReference type="Gene3D" id="1.25.40.10">
    <property type="entry name" value="Tetratricopeptide repeat domain"/>
    <property type="match status" value="3"/>
</dbReference>
<dbReference type="InterPro" id="IPR008410">
    <property type="entry name" value="BCSC_C"/>
</dbReference>
<dbReference type="InterPro" id="IPR003921">
    <property type="entry name" value="Cell_synth_C"/>
</dbReference>
<dbReference type="InterPro" id="IPR051012">
    <property type="entry name" value="CellSynth/LPSAsmb/PSIAsmb"/>
</dbReference>
<dbReference type="InterPro" id="IPR011990">
    <property type="entry name" value="TPR-like_helical_dom_sf"/>
</dbReference>
<dbReference type="InterPro" id="IPR019734">
    <property type="entry name" value="TPR_rpt"/>
</dbReference>
<dbReference type="PANTHER" id="PTHR45586:SF1">
    <property type="entry name" value="LIPOPOLYSACCHARIDE ASSEMBLY PROTEIN B"/>
    <property type="match status" value="1"/>
</dbReference>
<dbReference type="PANTHER" id="PTHR45586">
    <property type="entry name" value="TPR REPEAT-CONTAINING PROTEIN PA4667"/>
    <property type="match status" value="1"/>
</dbReference>
<dbReference type="Pfam" id="PF05420">
    <property type="entry name" value="BCSC_C"/>
    <property type="match status" value="1"/>
</dbReference>
<dbReference type="Pfam" id="PF14559">
    <property type="entry name" value="TPR_19"/>
    <property type="match status" value="3"/>
</dbReference>
<dbReference type="PRINTS" id="PR01441">
    <property type="entry name" value="CELLSNTHASEC"/>
</dbReference>
<dbReference type="SMART" id="SM00028">
    <property type="entry name" value="TPR"/>
    <property type="match status" value="6"/>
</dbReference>
<dbReference type="SUPFAM" id="SSF48452">
    <property type="entry name" value="TPR-like"/>
    <property type="match status" value="3"/>
</dbReference>
<dbReference type="PROSITE" id="PS50005">
    <property type="entry name" value="TPR"/>
    <property type="match status" value="7"/>
</dbReference>
<dbReference type="PROSITE" id="PS50293">
    <property type="entry name" value="TPR_REGION"/>
    <property type="match status" value="4"/>
</dbReference>
<sequence>MNRRYVFSLSAGLLASSCMGAIMPVPVARAQQASTAMTGAQATGGTAAPRQILLQQARFWLQQQQYDNARQALQNAQRIAPDAPDVLEVQGEYQTAMGNREAAADTLRHLQEVAPGSVAANSLSDLLHERSISTGDLSHVRSLAASGHSAEAVAGYQKLFNGGRPPHSLAIEYYQTMAGVPADWDQARAGLAGLVAANPQDYRAQLAFAQTLTYNTSTRMEGLARLKDLQGFRTQAPVEAAAAAQSYRQTLSWLPVTAETQPLMQQWLTAHPDDTALKEHMLHPPGGPPDKAGLARQAGFQQLNSGRLSAAEQSFQSALQINSHDADSLGGMGLVSMRQGDAAEARRYFQEAMAADPKTADRWRPALAGMEISGDYAAVRQLIAAHQYTEAKQRLTSLARQPGQFTGATLMLADLQRTTGQIDASEQEYRSVLARDPNNQLALMGLARVDMAQGNTAEARQLLSRVGPQYATEVGEIEVTGLMAAASHTSDSARKVAILREAMTQAPRDPWVRINLANALQQQGDVAEAGRVMQPILANPVTAQDRQAGILYTYGAGNDAATRRLLSGLSPEDYSPAIRSIAEEMQIKEDLASRLSMVPNPVPLIREALAPPDPTGARGVAVADLFRQRGDMIHARMALRIASTRTIDLSPDQRLAYATEYMKISNPVAAARLLAPLGDGSGSGAGNALLPEQQQTLQQLRMGIAVAQSDLLNQRGDQAQAYDHLAPALRADPEATSPKLALARLYNGEGKSSKALDIDLAVLRHNPQDLDARQAAVQAAVNSGRKSLATHLAMDGVQESPMDARAWLGMAVADQADGHGHRTIADLRRAYDLRLQQVEGSRSASGPAATEEDALAPPSSNPFRHHGYGRQTELGAPVTGGSYSMEATSPEAADQMLSSISGQINTLRENLAPSIDGGLGFRSRSGEHGMGRLTEANIPIVGRLPLQAGESSLTFSITPTMIWSGDLNAGSVYDVPRYGTNMATEAYNQYVNSLSQNNSSSSLRTQQIQGGQGEAGFAPDVQFSNSWVRADVGASPIGFPITNVLGGVEFSPRVGPVTFRVSAERRSITNSVLSYGGLRDPNYNSALGRYALNHYGSQLASQWGQEWGGVVTNHFHGQVEATLGNTILYGGGGYAIQTGKNTRSNNEREAGIGANTLVWHNANMLVRIGVSLTYFGYANNQDFYTYGQGGYFSPQSYYSATVPIRYAGQHKRLDWDVTGSVGYQVFHEHSSPFFPTSSLLQSGAQYIADSYMQNATASDYLSEETVDRAYYPGDSIASLTGGFNARVGYRFTHNLRLDLSGRWQKAGNWTESGAMISVHYLIMDQ</sequence>
<comment type="function">
    <text evidence="1">Required for maximal bacterial cellulose synthesis. It may be involved in the formation of a membrane complex for extrusion of the cellulose product (By similarity).</text>
</comment>
<comment type="pathway">
    <text>Glycan metabolism; bacterial cellulose biosynthesis.</text>
</comment>
<comment type="subcellular location">
    <subcellularLocation>
        <location evidence="4">Cell outer membrane</location>
        <topology evidence="4">Peripheral membrane protein</topology>
    </subcellularLocation>
</comment>
<comment type="similarity">
    <text evidence="4">Belongs to the AcsC/BcsC family.</text>
</comment>
<gene>
    <name type="primary">bcsCI</name>
</gene>
<feature type="signal peptide" evidence="2">
    <location>
        <begin position="1"/>
        <end position="30"/>
    </location>
</feature>
<feature type="chain" id="PRO_0000035688" description="Cellulose synthase 1 operon protein C">
    <location>
        <begin position="31"/>
        <end position="1325"/>
    </location>
</feature>
<feature type="repeat" description="TPR 1">
    <location>
        <begin position="50"/>
        <end position="83"/>
    </location>
</feature>
<feature type="repeat" description="TPR 2">
    <location>
        <begin position="85"/>
        <end position="117"/>
    </location>
</feature>
<feature type="repeat" description="TPR 3">
    <location>
        <begin position="292"/>
        <end position="325"/>
    </location>
</feature>
<feature type="repeat" description="TPR 4">
    <location>
        <begin position="326"/>
        <end position="359"/>
    </location>
</feature>
<feature type="repeat" description="TPR 5">
    <location>
        <begin position="406"/>
        <end position="439"/>
    </location>
</feature>
<feature type="repeat" description="TPR 6">
    <location>
        <begin position="558"/>
        <end position="591"/>
    </location>
</feature>
<feature type="repeat" description="TPR 7">
    <location>
        <begin position="702"/>
        <end position="735"/>
    </location>
</feature>
<feature type="repeat" description="TPR 8">
    <location>
        <begin position="737"/>
        <end position="769"/>
    </location>
</feature>
<feature type="region of interest" description="Disordered" evidence="3">
    <location>
        <begin position="838"/>
        <end position="886"/>
    </location>
</feature>
<protein>
    <recommendedName>
        <fullName>Cellulose synthase 1 operon protein C</fullName>
    </recommendedName>
</protein>